<dbReference type="EC" id="2.3.1.225" evidence="1"/>
<dbReference type="EMBL" id="AAEY01000007">
    <property type="protein sequence ID" value="EAL22658.1"/>
    <property type="molecule type" value="Genomic_DNA"/>
</dbReference>
<dbReference type="EMBL" id="AAEY01000007">
    <property type="protein sequence ID" value="EAL22657.1"/>
    <property type="molecule type" value="Genomic_DNA"/>
</dbReference>
<dbReference type="RefSeq" id="XP_777304.1">
    <molecule id="P0CS69-2"/>
    <property type="nucleotide sequence ID" value="XM_772211.1"/>
</dbReference>
<dbReference type="RefSeq" id="XP_777305.1">
    <molecule id="P0CS69-1"/>
    <property type="nucleotide sequence ID" value="XM_772212.1"/>
</dbReference>
<dbReference type="SMR" id="P0CS69"/>
<dbReference type="EnsemblFungi" id="AAW41652">
    <property type="protein sequence ID" value="AAW41652"/>
    <property type="gene ID" value="CNB04690"/>
</dbReference>
<dbReference type="GeneID" id="4934197"/>
<dbReference type="KEGG" id="cnb:CNBB1070"/>
<dbReference type="VEuPathDB" id="FungiDB:CNBB1070"/>
<dbReference type="HOGENOM" id="CLU_027721_7_1_1"/>
<dbReference type="OrthoDB" id="7077at5206"/>
<dbReference type="GO" id="GO:0005789">
    <property type="term" value="C:endoplasmic reticulum membrane"/>
    <property type="evidence" value="ECO:0007669"/>
    <property type="project" value="UniProtKB-SubCell"/>
</dbReference>
<dbReference type="GO" id="GO:0019706">
    <property type="term" value="F:protein-cysteine S-palmitoyltransferase activity"/>
    <property type="evidence" value="ECO:0007669"/>
    <property type="project" value="UniProtKB-UniRule"/>
</dbReference>
<dbReference type="HAMAP" id="MF_03199">
    <property type="entry name" value="DHHC_PAT_PFA4"/>
    <property type="match status" value="1"/>
</dbReference>
<dbReference type="InterPro" id="IPR001594">
    <property type="entry name" value="Palmitoyltrfase_DHHC"/>
</dbReference>
<dbReference type="InterPro" id="IPR033682">
    <property type="entry name" value="PFA4"/>
</dbReference>
<dbReference type="InterPro" id="IPR039859">
    <property type="entry name" value="PFA4/ZDH16/20/ERF2-like"/>
</dbReference>
<dbReference type="PANTHER" id="PTHR12246">
    <property type="entry name" value="PALMITOYLTRANSFERASE ZDHHC16"/>
    <property type="match status" value="1"/>
</dbReference>
<dbReference type="Pfam" id="PF01529">
    <property type="entry name" value="DHHC"/>
    <property type="match status" value="1"/>
</dbReference>
<dbReference type="PROSITE" id="PS50216">
    <property type="entry name" value="DHHC"/>
    <property type="match status" value="1"/>
</dbReference>
<accession>P0CS69</accession>
<accession>Q55YA8</accession>
<accession>Q55YA9</accession>
<accession>Q5KLN0</accession>
<accession>Q5KLN1</accession>
<sequence>MAARNWSRVWVGGTVILISFIAFSSQIFVIWPWYGREISLDLLKLLVPLNLAAFMIFWNYRLCVITSPGSVPEGWRPNIGAMDGMEVKKGTHTPRYCKNCEHYKPPRAHHCRQCKTCWLKLDHHCPWIGNCVGFYNQGHFIRFLLWVDIGTTFHLIIMVRRVLYIAEYYHQEPTLADVLFLVFNFATCVPVWLCVGMFSIYHVYLACGNSTTIEGWEKDKVATLIRRGKIKEVKYPYNIGIYKNIKSVLGPNPFLWLWPQKMQGDGLSFPVNPSAGDHTTQYFWPPQDPSRLPNPPPIPAHASPFVYGNNGFNPNLQPTNSLRARRSSTPHIDEDEHSHERDQYRHYSSGEERDNDSISTSSSPKPYLSDYDHYDEGPMYPGERMTALIPRVRRGSEGWEVAPGGGWNAYSGMMDEEVGWDDEVGYDEAPGEGPYVERPWEMRGRYNVYDTEEESGYAH</sequence>
<gene>
    <name evidence="1" type="primary">PFA4</name>
    <name type="ordered locus">CNBB1070</name>
</gene>
<keyword id="KW-0012">Acyltransferase</keyword>
<keyword id="KW-0025">Alternative splicing</keyword>
<keyword id="KW-0256">Endoplasmic reticulum</keyword>
<keyword id="KW-0449">Lipoprotein</keyword>
<keyword id="KW-0472">Membrane</keyword>
<keyword id="KW-0564">Palmitate</keyword>
<keyword id="KW-0808">Transferase</keyword>
<keyword id="KW-0812">Transmembrane</keyword>
<keyword id="KW-1133">Transmembrane helix</keyword>
<proteinExistence type="inferred from homology"/>
<comment type="function">
    <text evidence="1">Mediates the reversible addition of palmitate to target proteins, thereby regulating their membrane association and biological function.</text>
</comment>
<comment type="catalytic activity">
    <reaction evidence="1">
        <text>L-cysteinyl-[protein] + hexadecanoyl-CoA = S-hexadecanoyl-L-cysteinyl-[protein] + CoA</text>
        <dbReference type="Rhea" id="RHEA:36683"/>
        <dbReference type="Rhea" id="RHEA-COMP:10131"/>
        <dbReference type="Rhea" id="RHEA-COMP:11032"/>
        <dbReference type="ChEBI" id="CHEBI:29950"/>
        <dbReference type="ChEBI" id="CHEBI:57287"/>
        <dbReference type="ChEBI" id="CHEBI:57379"/>
        <dbReference type="ChEBI" id="CHEBI:74151"/>
        <dbReference type="EC" id="2.3.1.225"/>
    </reaction>
</comment>
<comment type="subcellular location">
    <subcellularLocation>
        <location evidence="1">Endoplasmic reticulum membrane</location>
        <topology evidence="1">Multi-pass membrane protein</topology>
    </subcellularLocation>
</comment>
<comment type="alternative products">
    <event type="alternative splicing"/>
    <isoform>
        <id>P0CS69-1</id>
        <name>1</name>
        <sequence type="displayed"/>
    </isoform>
    <isoform>
        <id>P0CS69-2</id>
        <name>2</name>
        <sequence type="described" ref="VSP_041435 VSP_041436"/>
    </isoform>
</comment>
<comment type="domain">
    <text evidence="1">The DHHC domain is required for palmitoyltransferase activity.</text>
</comment>
<comment type="similarity">
    <text evidence="1">Belongs to the DHHC palmitoyltransferase family. PFA4 subfamily.</text>
</comment>
<name>PFA4_CRYNB</name>
<protein>
    <recommendedName>
        <fullName evidence="1">Palmitoyltransferase PFA4</fullName>
        <ecNumber evidence="1">2.3.1.225</ecNumber>
    </recommendedName>
    <alternativeName>
        <fullName evidence="1">Protein S-acyltransferase</fullName>
        <shortName evidence="1">PAT</shortName>
    </alternativeName>
    <alternativeName>
        <fullName evidence="1">Protein fatty acyltransferase 4</fullName>
    </alternativeName>
</protein>
<feature type="chain" id="PRO_0000410347" description="Palmitoyltransferase PFA4">
    <location>
        <begin position="1"/>
        <end position="459"/>
    </location>
</feature>
<feature type="topological domain" description="Cytoplasmic" evidence="1">
    <location>
        <begin position="1"/>
        <end position="9"/>
    </location>
</feature>
<feature type="transmembrane region" description="Helical" evidence="1">
    <location>
        <begin position="10"/>
        <end position="30"/>
    </location>
</feature>
<feature type="topological domain" description="Lumenal" evidence="1">
    <location>
        <begin position="31"/>
        <end position="37"/>
    </location>
</feature>
<feature type="transmembrane region" description="Helical" evidence="1">
    <location>
        <begin position="38"/>
        <end position="58"/>
    </location>
</feature>
<feature type="topological domain" description="Cytoplasmic" evidence="1">
    <location>
        <begin position="59"/>
        <end position="138"/>
    </location>
</feature>
<feature type="transmembrane region" description="Helical" evidence="1">
    <location>
        <begin position="139"/>
        <end position="159"/>
    </location>
</feature>
<feature type="topological domain" description="Lumenal" evidence="1">
    <location>
        <begin position="160"/>
        <end position="177"/>
    </location>
</feature>
<feature type="transmembrane region" description="Helical" evidence="1">
    <location>
        <begin position="178"/>
        <end position="198"/>
    </location>
</feature>
<feature type="topological domain" description="Cytoplasmic" evidence="1">
    <location>
        <begin position="199"/>
        <end position="459"/>
    </location>
</feature>
<feature type="domain" description="DHHC" evidence="2">
    <location>
        <begin position="95"/>
        <end position="145"/>
    </location>
</feature>
<feature type="region of interest" description="Disordered" evidence="3">
    <location>
        <begin position="278"/>
        <end position="379"/>
    </location>
</feature>
<feature type="compositionally biased region" description="Pro residues" evidence="3">
    <location>
        <begin position="286"/>
        <end position="299"/>
    </location>
</feature>
<feature type="compositionally biased region" description="Polar residues" evidence="3">
    <location>
        <begin position="310"/>
        <end position="322"/>
    </location>
</feature>
<feature type="compositionally biased region" description="Basic and acidic residues" evidence="3">
    <location>
        <begin position="331"/>
        <end position="356"/>
    </location>
</feature>
<feature type="active site" description="S-palmitoyl cysteine intermediate" evidence="1">
    <location>
        <position position="125"/>
    </location>
</feature>
<feature type="splice variant" id="VSP_041435" description="In isoform 2." evidence="4">
    <original>DHTTQYFWPPQDPSRLPNPPPIPAHASPFVYGNNGFNPNLQPTNSLRARRSSTPHIDEDEHSHE</original>
    <variation>GESATVEWAGIVAPREGSSAPGEYGAADQCESAGSGSGTNGRPGMGHGEERVRHGRARVEHSMV</variation>
    <location>
        <begin position="277"/>
        <end position="340"/>
    </location>
</feature>
<feature type="splice variant" id="VSP_041436" description="In isoform 2." evidence="4">
    <location>
        <begin position="341"/>
        <end position="459"/>
    </location>
</feature>
<evidence type="ECO:0000255" key="1">
    <source>
        <dbReference type="HAMAP-Rule" id="MF_03199"/>
    </source>
</evidence>
<evidence type="ECO:0000255" key="2">
    <source>
        <dbReference type="PROSITE-ProRule" id="PRU00067"/>
    </source>
</evidence>
<evidence type="ECO:0000256" key="3">
    <source>
        <dbReference type="SAM" id="MobiDB-lite"/>
    </source>
</evidence>
<evidence type="ECO:0000305" key="4"/>
<organism>
    <name type="scientific">Cryptococcus neoformans var. neoformans serotype D (strain B-3501A)</name>
    <name type="common">Filobasidiella neoformans</name>
    <dbReference type="NCBI Taxonomy" id="283643"/>
    <lineage>
        <taxon>Eukaryota</taxon>
        <taxon>Fungi</taxon>
        <taxon>Dikarya</taxon>
        <taxon>Basidiomycota</taxon>
        <taxon>Agaricomycotina</taxon>
        <taxon>Tremellomycetes</taxon>
        <taxon>Tremellales</taxon>
        <taxon>Cryptococcaceae</taxon>
        <taxon>Cryptococcus</taxon>
        <taxon>Cryptococcus neoformans species complex</taxon>
    </lineage>
</organism>
<reference key="1">
    <citation type="journal article" date="2005" name="Science">
        <title>The genome of the basidiomycetous yeast and human pathogen Cryptococcus neoformans.</title>
        <authorList>
            <person name="Loftus B.J."/>
            <person name="Fung E."/>
            <person name="Roncaglia P."/>
            <person name="Rowley D."/>
            <person name="Amedeo P."/>
            <person name="Bruno D."/>
            <person name="Vamathevan J."/>
            <person name="Miranda M."/>
            <person name="Anderson I.J."/>
            <person name="Fraser J.A."/>
            <person name="Allen J.E."/>
            <person name="Bosdet I.E."/>
            <person name="Brent M.R."/>
            <person name="Chiu R."/>
            <person name="Doering T.L."/>
            <person name="Donlin M.J."/>
            <person name="D'Souza C.A."/>
            <person name="Fox D.S."/>
            <person name="Grinberg V."/>
            <person name="Fu J."/>
            <person name="Fukushima M."/>
            <person name="Haas B.J."/>
            <person name="Huang J.C."/>
            <person name="Janbon G."/>
            <person name="Jones S.J.M."/>
            <person name="Koo H.L."/>
            <person name="Krzywinski M.I."/>
            <person name="Kwon-Chung K.J."/>
            <person name="Lengeler K.B."/>
            <person name="Maiti R."/>
            <person name="Marra M.A."/>
            <person name="Marra R.E."/>
            <person name="Mathewson C.A."/>
            <person name="Mitchell T.G."/>
            <person name="Pertea M."/>
            <person name="Riggs F.R."/>
            <person name="Salzberg S.L."/>
            <person name="Schein J.E."/>
            <person name="Shvartsbeyn A."/>
            <person name="Shin H."/>
            <person name="Shumway M."/>
            <person name="Specht C.A."/>
            <person name="Suh B.B."/>
            <person name="Tenney A."/>
            <person name="Utterback T.R."/>
            <person name="Wickes B.L."/>
            <person name="Wortman J.R."/>
            <person name="Wye N.H."/>
            <person name="Kronstad J.W."/>
            <person name="Lodge J.K."/>
            <person name="Heitman J."/>
            <person name="Davis R.W."/>
            <person name="Fraser C.M."/>
            <person name="Hyman R.W."/>
        </authorList>
    </citation>
    <scope>NUCLEOTIDE SEQUENCE [LARGE SCALE GENOMIC DNA]</scope>
    <source>
        <strain>B-3501A</strain>
    </source>
</reference>